<feature type="chain" id="PRO_0000360525" description="Probable coenzyme A transferase subunit beta">
    <location>
        <begin position="1"/>
        <end position="217"/>
    </location>
</feature>
<feature type="active site" evidence="1">
    <location>
        <position position="50"/>
    </location>
</feature>
<gene>
    <name type="primary">yodR</name>
    <name type="synonym">yokO</name>
    <name type="ordered locus">BSU19720</name>
</gene>
<evidence type="ECO:0000250" key="1"/>
<evidence type="ECO:0000305" key="2"/>
<name>YODR_BACSU</name>
<organism>
    <name type="scientific">Bacillus subtilis (strain 168)</name>
    <dbReference type="NCBI Taxonomy" id="224308"/>
    <lineage>
        <taxon>Bacteria</taxon>
        <taxon>Bacillati</taxon>
        <taxon>Bacillota</taxon>
        <taxon>Bacilli</taxon>
        <taxon>Bacillales</taxon>
        <taxon>Bacillaceae</taxon>
        <taxon>Bacillus</taxon>
    </lineage>
</organism>
<protein>
    <recommendedName>
        <fullName>Probable coenzyme A transferase subunit beta</fullName>
        <ecNumber>2.8.3.-</ecNumber>
    </recommendedName>
    <alternativeName>
        <fullName>Probable CoA-transferase subunit beta</fullName>
    </alternativeName>
</protein>
<sequence length="217" mass="23333">MGLGVAEREQIAKRAATEIKQGMIVNLGIGIPSLVPNFLKPDMQVMFQAENGVLGIGESPEKGEEDAHLCNAAGYPVRAVKGASYFDTTMSFAMIRKGKIDITILGALQVSQSGDLANWLVPGKKVPGMGGAMELAQKAKKVVVVMSHTDQKGRPKLTERCTLPLTAAGCVDLIITEKAVLEVDSHHFILKELMNGSTIDEVTRLTEAEIKIDMPFS</sequence>
<keyword id="KW-1185">Reference proteome</keyword>
<keyword id="KW-0808">Transferase</keyword>
<dbReference type="EC" id="2.8.3.-"/>
<dbReference type="EMBL" id="AF015775">
    <property type="protein sequence ID" value="AAB72072.1"/>
    <property type="molecule type" value="Genomic_DNA"/>
</dbReference>
<dbReference type="EMBL" id="AF006665">
    <property type="protein sequence ID" value="AAB81156.1"/>
    <property type="molecule type" value="Genomic_DNA"/>
</dbReference>
<dbReference type="EMBL" id="AL009126">
    <property type="protein sequence ID" value="CAB13863.1"/>
    <property type="molecule type" value="Genomic_DNA"/>
</dbReference>
<dbReference type="PIR" id="D69904">
    <property type="entry name" value="D69904"/>
</dbReference>
<dbReference type="RefSeq" id="NP_389853.1">
    <property type="nucleotide sequence ID" value="NC_000964.3"/>
</dbReference>
<dbReference type="RefSeq" id="WP_004399417.1">
    <property type="nucleotide sequence ID" value="NZ_OZ025638.1"/>
</dbReference>
<dbReference type="SMR" id="O34466"/>
<dbReference type="FunCoup" id="O34466">
    <property type="interactions" value="25"/>
</dbReference>
<dbReference type="STRING" id="224308.BSU19720"/>
<dbReference type="PaxDb" id="224308-BSU19720"/>
<dbReference type="EnsemblBacteria" id="CAB13863">
    <property type="protein sequence ID" value="CAB13863"/>
    <property type="gene ID" value="BSU_19720"/>
</dbReference>
<dbReference type="GeneID" id="940048"/>
<dbReference type="KEGG" id="bsu:BSU19720"/>
<dbReference type="PATRIC" id="fig|224308.179.peg.2159"/>
<dbReference type="eggNOG" id="COG2057">
    <property type="taxonomic scope" value="Bacteria"/>
</dbReference>
<dbReference type="InParanoid" id="O34466"/>
<dbReference type="OrthoDB" id="9778604at2"/>
<dbReference type="PhylomeDB" id="O34466"/>
<dbReference type="BioCyc" id="BSUB:BSU19720-MONOMER"/>
<dbReference type="Proteomes" id="UP000001570">
    <property type="component" value="Chromosome"/>
</dbReference>
<dbReference type="GO" id="GO:0008410">
    <property type="term" value="F:CoA-transferase activity"/>
    <property type="evidence" value="ECO:0007669"/>
    <property type="project" value="InterPro"/>
</dbReference>
<dbReference type="Gene3D" id="3.40.1080.10">
    <property type="entry name" value="Glutaconate Coenzyme A-transferase"/>
    <property type="match status" value="1"/>
</dbReference>
<dbReference type="InterPro" id="IPR012791">
    <property type="entry name" value="3-oxoacid_CoA-transf_B"/>
</dbReference>
<dbReference type="InterPro" id="IPR004165">
    <property type="entry name" value="CoA_trans_fam_I"/>
</dbReference>
<dbReference type="InterPro" id="IPR037171">
    <property type="entry name" value="NagB/RpiA_transferase-like"/>
</dbReference>
<dbReference type="NCBIfam" id="TIGR02428">
    <property type="entry name" value="pcaJ_scoB_fam"/>
    <property type="match status" value="1"/>
</dbReference>
<dbReference type="PANTHER" id="PTHR13707">
    <property type="entry name" value="KETOACID-COENZYME A TRANSFERASE"/>
    <property type="match status" value="1"/>
</dbReference>
<dbReference type="PANTHER" id="PTHR13707:SF57">
    <property type="entry name" value="SUCCINYL-COA:3-KETOACID COENZYME A TRANSFERASE SUBUNIT B-RELATED"/>
    <property type="match status" value="1"/>
</dbReference>
<dbReference type="Pfam" id="PF01144">
    <property type="entry name" value="CoA_trans"/>
    <property type="match status" value="1"/>
</dbReference>
<dbReference type="SMART" id="SM00882">
    <property type="entry name" value="CoA_trans"/>
    <property type="match status" value="1"/>
</dbReference>
<dbReference type="SUPFAM" id="SSF100950">
    <property type="entry name" value="NagB/RpiA/CoA transferase-like"/>
    <property type="match status" value="1"/>
</dbReference>
<accession>O34466</accession>
<accession>Q796B2</accession>
<comment type="subunit">
    <text evidence="1">Heterodimer of a subunit alpha and a subunit beta.</text>
</comment>
<comment type="similarity">
    <text evidence="2">Belongs to the 3-oxoacid CoA-transferase subunit B family.</text>
</comment>
<proteinExistence type="inferred from homology"/>
<reference key="1">
    <citation type="journal article" date="1998" name="DNA Res.">
        <title>Sequence analysis of the Bacillus subtilis 168 chromosome region between the sspC and odhA loci (184 degrees-180 degrees).</title>
        <authorList>
            <person name="Ghim S.-Y."/>
            <person name="Choi S.-K."/>
            <person name="Shin B.-S."/>
            <person name="Jeong Y.-M."/>
            <person name="Sorokin A."/>
            <person name="Ehrlich S.D."/>
            <person name="Park S.-H."/>
        </authorList>
    </citation>
    <scope>NUCLEOTIDE SEQUENCE [GENOMIC DNA]</scope>
    <source>
        <strain>168</strain>
    </source>
</reference>
<reference key="2">
    <citation type="journal article" date="1997" name="Nature">
        <title>The complete genome sequence of the Gram-positive bacterium Bacillus subtilis.</title>
        <authorList>
            <person name="Kunst F."/>
            <person name="Ogasawara N."/>
            <person name="Moszer I."/>
            <person name="Albertini A.M."/>
            <person name="Alloni G."/>
            <person name="Azevedo V."/>
            <person name="Bertero M.G."/>
            <person name="Bessieres P."/>
            <person name="Bolotin A."/>
            <person name="Borchert S."/>
            <person name="Borriss R."/>
            <person name="Boursier L."/>
            <person name="Brans A."/>
            <person name="Braun M."/>
            <person name="Brignell S.C."/>
            <person name="Bron S."/>
            <person name="Brouillet S."/>
            <person name="Bruschi C.V."/>
            <person name="Caldwell B."/>
            <person name="Capuano V."/>
            <person name="Carter N.M."/>
            <person name="Choi S.-K."/>
            <person name="Codani J.-J."/>
            <person name="Connerton I.F."/>
            <person name="Cummings N.J."/>
            <person name="Daniel R.A."/>
            <person name="Denizot F."/>
            <person name="Devine K.M."/>
            <person name="Duesterhoeft A."/>
            <person name="Ehrlich S.D."/>
            <person name="Emmerson P.T."/>
            <person name="Entian K.-D."/>
            <person name="Errington J."/>
            <person name="Fabret C."/>
            <person name="Ferrari E."/>
            <person name="Foulger D."/>
            <person name="Fritz C."/>
            <person name="Fujita M."/>
            <person name="Fujita Y."/>
            <person name="Fuma S."/>
            <person name="Galizzi A."/>
            <person name="Galleron N."/>
            <person name="Ghim S.-Y."/>
            <person name="Glaser P."/>
            <person name="Goffeau A."/>
            <person name="Golightly E.J."/>
            <person name="Grandi G."/>
            <person name="Guiseppi G."/>
            <person name="Guy B.J."/>
            <person name="Haga K."/>
            <person name="Haiech J."/>
            <person name="Harwood C.R."/>
            <person name="Henaut A."/>
            <person name="Hilbert H."/>
            <person name="Holsappel S."/>
            <person name="Hosono S."/>
            <person name="Hullo M.-F."/>
            <person name="Itaya M."/>
            <person name="Jones L.-M."/>
            <person name="Joris B."/>
            <person name="Karamata D."/>
            <person name="Kasahara Y."/>
            <person name="Klaerr-Blanchard M."/>
            <person name="Klein C."/>
            <person name="Kobayashi Y."/>
            <person name="Koetter P."/>
            <person name="Koningstein G."/>
            <person name="Krogh S."/>
            <person name="Kumano M."/>
            <person name="Kurita K."/>
            <person name="Lapidus A."/>
            <person name="Lardinois S."/>
            <person name="Lauber J."/>
            <person name="Lazarevic V."/>
            <person name="Lee S.-M."/>
            <person name="Levine A."/>
            <person name="Liu H."/>
            <person name="Masuda S."/>
            <person name="Mauel C."/>
            <person name="Medigue C."/>
            <person name="Medina N."/>
            <person name="Mellado R.P."/>
            <person name="Mizuno M."/>
            <person name="Moestl D."/>
            <person name="Nakai S."/>
            <person name="Noback M."/>
            <person name="Noone D."/>
            <person name="O'Reilly M."/>
            <person name="Ogawa K."/>
            <person name="Ogiwara A."/>
            <person name="Oudega B."/>
            <person name="Park S.-H."/>
            <person name="Parro V."/>
            <person name="Pohl T.M."/>
            <person name="Portetelle D."/>
            <person name="Porwollik S."/>
            <person name="Prescott A.M."/>
            <person name="Presecan E."/>
            <person name="Pujic P."/>
            <person name="Purnelle B."/>
            <person name="Rapoport G."/>
            <person name="Rey M."/>
            <person name="Reynolds S."/>
            <person name="Rieger M."/>
            <person name="Rivolta C."/>
            <person name="Rocha E."/>
            <person name="Roche B."/>
            <person name="Rose M."/>
            <person name="Sadaie Y."/>
            <person name="Sato T."/>
            <person name="Scanlan E."/>
            <person name="Schleich S."/>
            <person name="Schroeter R."/>
            <person name="Scoffone F."/>
            <person name="Sekiguchi J."/>
            <person name="Sekowska A."/>
            <person name="Seror S.J."/>
            <person name="Serror P."/>
            <person name="Shin B.-S."/>
            <person name="Soldo B."/>
            <person name="Sorokin A."/>
            <person name="Tacconi E."/>
            <person name="Takagi T."/>
            <person name="Takahashi H."/>
            <person name="Takemaru K."/>
            <person name="Takeuchi M."/>
            <person name="Tamakoshi A."/>
            <person name="Tanaka T."/>
            <person name="Terpstra P."/>
            <person name="Tognoni A."/>
            <person name="Tosato V."/>
            <person name="Uchiyama S."/>
            <person name="Vandenbol M."/>
            <person name="Vannier F."/>
            <person name="Vassarotti A."/>
            <person name="Viari A."/>
            <person name="Wambutt R."/>
            <person name="Wedler E."/>
            <person name="Wedler H."/>
            <person name="Weitzenegger T."/>
            <person name="Winters P."/>
            <person name="Wipat A."/>
            <person name="Yamamoto H."/>
            <person name="Yamane K."/>
            <person name="Yasumoto K."/>
            <person name="Yata K."/>
            <person name="Yoshida K."/>
            <person name="Yoshikawa H.-F."/>
            <person name="Zumstein E."/>
            <person name="Yoshikawa H."/>
            <person name="Danchin A."/>
        </authorList>
    </citation>
    <scope>NUCLEOTIDE SEQUENCE [LARGE SCALE GENOMIC DNA]</scope>
    <source>
        <strain>168</strain>
    </source>
</reference>